<name>D105B_MACFA</name>
<sequence>MALIRKTFYFVFAVFFILVQQPSGCQAGLEFSEPFPSGRFAVCESCKLGRGKCRKECLENEKPDGSCRLNFLCCRPRM</sequence>
<dbReference type="EMBL" id="AM410114">
    <property type="protein sequence ID" value="CAL68929.1"/>
    <property type="molecule type" value="Genomic_DNA"/>
</dbReference>
<dbReference type="SMR" id="A4H209"/>
<dbReference type="STRING" id="9541.ENSMFAP00000014934"/>
<dbReference type="Ensembl" id="ENSMFAT00000065448.2">
    <property type="protein sequence ID" value="ENSMFAP00000014934.1"/>
    <property type="gene ID" value="ENSMFAG00000030679.2"/>
</dbReference>
<dbReference type="Ensembl" id="ENSMFAT00000077180.1">
    <property type="protein sequence ID" value="ENSMFAP00000048802.1"/>
    <property type="gene ID" value="ENSMFAG00000030679.2"/>
</dbReference>
<dbReference type="Ensembl" id="ENSMFAT00000080832.1">
    <property type="protein sequence ID" value="ENSMFAP00000047906.1"/>
    <property type="gene ID" value="ENSMFAG00000030679.2"/>
</dbReference>
<dbReference type="Ensembl" id="ENSMFAT00000089616.1">
    <property type="protein sequence ID" value="ENSMFAP00000056580.1"/>
    <property type="gene ID" value="ENSMFAG00000030679.2"/>
</dbReference>
<dbReference type="Ensembl" id="ENSMFAT00000101217.1">
    <property type="protein sequence ID" value="ENSMFAP00000051471.1"/>
    <property type="gene ID" value="ENSMFAG00000056365.1"/>
</dbReference>
<dbReference type="VEuPathDB" id="HostDB:ENSMFAG00000030679"/>
<dbReference type="eggNOG" id="ENOG502TE24">
    <property type="taxonomic scope" value="Eukaryota"/>
</dbReference>
<dbReference type="GeneTree" id="ENSGT00390000002317"/>
<dbReference type="OMA" id="CRRMCLE"/>
<dbReference type="Proteomes" id="UP000233100">
    <property type="component" value="Chromosome 8"/>
</dbReference>
<dbReference type="Bgee" id="ENSMFAG00000030679">
    <property type="expression patterns" value="Expressed in multicellular organism"/>
</dbReference>
<dbReference type="GO" id="GO:0005576">
    <property type="term" value="C:extracellular region"/>
    <property type="evidence" value="ECO:0007669"/>
    <property type="project" value="UniProtKB-SubCell"/>
</dbReference>
<dbReference type="GO" id="GO:0042742">
    <property type="term" value="P:defense response to bacterium"/>
    <property type="evidence" value="ECO:0007669"/>
    <property type="project" value="UniProtKB-KW"/>
</dbReference>
<dbReference type="GO" id="GO:0045087">
    <property type="term" value="P:innate immune response"/>
    <property type="evidence" value="ECO:0007669"/>
    <property type="project" value="InterPro"/>
</dbReference>
<dbReference type="InterPro" id="IPR025933">
    <property type="entry name" value="Beta_defensin_dom"/>
</dbReference>
<dbReference type="Pfam" id="PF13841">
    <property type="entry name" value="Defensin_beta_2"/>
    <property type="match status" value="1"/>
</dbReference>
<protein>
    <recommendedName>
        <fullName>Beta-defensin 105A</fullName>
    </recommendedName>
    <alternativeName>
        <fullName>Defensin, beta 105</fullName>
    </alternativeName>
    <alternativeName>
        <fullName>Defensin, beta 105A</fullName>
    </alternativeName>
</protein>
<feature type="signal peptide" evidence="2">
    <location>
        <begin position="1"/>
        <end position="27"/>
    </location>
</feature>
<feature type="peptide" id="PRO_0000289813" description="Beta-defensin 105A">
    <location>
        <begin position="28"/>
        <end position="78"/>
    </location>
</feature>
<feature type="disulfide bond" evidence="1">
    <location>
        <begin position="43"/>
        <end position="74"/>
    </location>
</feature>
<feature type="disulfide bond" evidence="1">
    <location>
        <begin position="53"/>
        <end position="67"/>
    </location>
</feature>
<feature type="disulfide bond" evidence="1">
    <location>
        <begin position="57"/>
        <end position="73"/>
    </location>
</feature>
<reference key="1">
    <citation type="submission" date="2006-11" db="EMBL/GenBank/DDBJ databases">
        <title>Evolution and sequence variation of human beta-defensin genes.</title>
        <authorList>
            <person name="Hollox E.J."/>
            <person name="Armour J.A.L."/>
        </authorList>
    </citation>
    <scope>NUCLEOTIDE SEQUENCE [GENOMIC DNA]</scope>
</reference>
<evidence type="ECO:0000250" key="1"/>
<evidence type="ECO:0000255" key="2"/>
<evidence type="ECO:0000305" key="3"/>
<accession>A4H209</accession>
<organism>
    <name type="scientific">Macaca fascicularis</name>
    <name type="common">Crab-eating macaque</name>
    <name type="synonym">Cynomolgus monkey</name>
    <dbReference type="NCBI Taxonomy" id="9541"/>
    <lineage>
        <taxon>Eukaryota</taxon>
        <taxon>Metazoa</taxon>
        <taxon>Chordata</taxon>
        <taxon>Craniata</taxon>
        <taxon>Vertebrata</taxon>
        <taxon>Euteleostomi</taxon>
        <taxon>Mammalia</taxon>
        <taxon>Eutheria</taxon>
        <taxon>Euarchontoglires</taxon>
        <taxon>Primates</taxon>
        <taxon>Haplorrhini</taxon>
        <taxon>Catarrhini</taxon>
        <taxon>Cercopithecidae</taxon>
        <taxon>Cercopithecinae</taxon>
        <taxon>Macaca</taxon>
    </lineage>
</organism>
<comment type="function">
    <text evidence="1">Has antimicrobial activity.</text>
</comment>
<comment type="subcellular location">
    <subcellularLocation>
        <location evidence="1">Secreted</location>
    </subcellularLocation>
</comment>
<comment type="similarity">
    <text evidence="3">Belongs to the beta-defensin family.</text>
</comment>
<proteinExistence type="inferred from homology"/>
<gene>
    <name type="primary">DEFB105A</name>
    <name type="synonym">DEFB105</name>
</gene>
<keyword id="KW-0044">Antibiotic</keyword>
<keyword id="KW-0929">Antimicrobial</keyword>
<keyword id="KW-0211">Defensin</keyword>
<keyword id="KW-1015">Disulfide bond</keyword>
<keyword id="KW-1185">Reference proteome</keyword>
<keyword id="KW-0964">Secreted</keyword>
<keyword id="KW-0732">Signal</keyword>